<name>NDHM_CROS5</name>
<protein>
    <recommendedName>
        <fullName evidence="1">NAD(P)H-quinone oxidoreductase subunit M</fullName>
        <ecNumber evidence="1">7.1.1.-</ecNumber>
    </recommendedName>
    <alternativeName>
        <fullName evidence="1">NAD(P)H dehydrogenase I subunit M</fullName>
        <shortName evidence="1">NDH-1 subunit M</shortName>
        <shortName evidence="1">NDH-M</shortName>
    </alternativeName>
</protein>
<accession>B1WTG3</accession>
<comment type="function">
    <text evidence="1">NDH-1 shuttles electrons from an unknown electron donor, via FMN and iron-sulfur (Fe-S) centers, to quinones in the respiratory and/or the photosynthetic chain. The immediate electron acceptor for the enzyme in this species is believed to be plastoquinone. Couples the redox reaction to proton translocation, and thus conserves the redox energy in a proton gradient. Cyanobacterial NDH-1 also plays a role in inorganic carbon-concentration.</text>
</comment>
<comment type="catalytic activity">
    <reaction evidence="1">
        <text>a plastoquinone + NADH + (n+1) H(+)(in) = a plastoquinol + NAD(+) + n H(+)(out)</text>
        <dbReference type="Rhea" id="RHEA:42608"/>
        <dbReference type="Rhea" id="RHEA-COMP:9561"/>
        <dbReference type="Rhea" id="RHEA-COMP:9562"/>
        <dbReference type="ChEBI" id="CHEBI:15378"/>
        <dbReference type="ChEBI" id="CHEBI:17757"/>
        <dbReference type="ChEBI" id="CHEBI:57540"/>
        <dbReference type="ChEBI" id="CHEBI:57945"/>
        <dbReference type="ChEBI" id="CHEBI:62192"/>
    </reaction>
</comment>
<comment type="catalytic activity">
    <reaction evidence="1">
        <text>a plastoquinone + NADPH + (n+1) H(+)(in) = a plastoquinol + NADP(+) + n H(+)(out)</text>
        <dbReference type="Rhea" id="RHEA:42612"/>
        <dbReference type="Rhea" id="RHEA-COMP:9561"/>
        <dbReference type="Rhea" id="RHEA-COMP:9562"/>
        <dbReference type="ChEBI" id="CHEBI:15378"/>
        <dbReference type="ChEBI" id="CHEBI:17757"/>
        <dbReference type="ChEBI" id="CHEBI:57783"/>
        <dbReference type="ChEBI" id="CHEBI:58349"/>
        <dbReference type="ChEBI" id="CHEBI:62192"/>
    </reaction>
</comment>
<comment type="subunit">
    <text evidence="1">NDH-1 can be composed of about 15 different subunits; different subcomplexes with different compositions have been identified which probably have different functions.</text>
</comment>
<comment type="subcellular location">
    <subcellularLocation>
        <location evidence="1">Cellular thylakoid membrane</location>
        <topology evidence="1">Peripheral membrane protein</topology>
        <orientation evidence="1">Cytoplasmic side</orientation>
    </subcellularLocation>
</comment>
<comment type="similarity">
    <text evidence="1">Belongs to the complex I NdhM subunit family.</text>
</comment>
<comment type="sequence caution" evidence="2">
    <conflict type="erroneous initiation">
        <sequence resource="EMBL-CDS" id="ACB53678"/>
    </conflict>
</comment>
<organism>
    <name type="scientific">Crocosphaera subtropica (strain ATCC 51142 / BH68)</name>
    <name type="common">Cyanothece sp. (strain ATCC 51142)</name>
    <dbReference type="NCBI Taxonomy" id="43989"/>
    <lineage>
        <taxon>Bacteria</taxon>
        <taxon>Bacillati</taxon>
        <taxon>Cyanobacteriota</taxon>
        <taxon>Cyanophyceae</taxon>
        <taxon>Oscillatoriophycideae</taxon>
        <taxon>Chroococcales</taxon>
        <taxon>Aphanothecaceae</taxon>
        <taxon>Crocosphaera</taxon>
        <taxon>Crocosphaera subtropica</taxon>
    </lineage>
</organism>
<evidence type="ECO:0000255" key="1">
    <source>
        <dbReference type="HAMAP-Rule" id="MF_01352"/>
    </source>
</evidence>
<evidence type="ECO:0000305" key="2"/>
<proteinExistence type="inferred from homology"/>
<dbReference type="EC" id="7.1.1.-" evidence="1"/>
<dbReference type="EMBL" id="CP000806">
    <property type="protein sequence ID" value="ACB53678.1"/>
    <property type="status" value="ALT_INIT"/>
    <property type="molecule type" value="Genomic_DNA"/>
</dbReference>
<dbReference type="RefSeq" id="WP_009543608.1">
    <property type="nucleotide sequence ID" value="NC_010546.1"/>
</dbReference>
<dbReference type="SMR" id="B1WTG3"/>
<dbReference type="STRING" id="43989.cce_4330"/>
<dbReference type="KEGG" id="cyt:cce_4330"/>
<dbReference type="eggNOG" id="ENOG5031AQM">
    <property type="taxonomic scope" value="Bacteria"/>
</dbReference>
<dbReference type="HOGENOM" id="CLU_137431_0_0_3"/>
<dbReference type="OrthoDB" id="461686at2"/>
<dbReference type="Proteomes" id="UP000001203">
    <property type="component" value="Chromosome circular"/>
</dbReference>
<dbReference type="GO" id="GO:0031676">
    <property type="term" value="C:plasma membrane-derived thylakoid membrane"/>
    <property type="evidence" value="ECO:0007669"/>
    <property type="project" value="UniProtKB-SubCell"/>
</dbReference>
<dbReference type="GO" id="GO:0016655">
    <property type="term" value="F:oxidoreductase activity, acting on NAD(P)H, quinone or similar compound as acceptor"/>
    <property type="evidence" value="ECO:0007669"/>
    <property type="project" value="UniProtKB-UniRule"/>
</dbReference>
<dbReference type="GO" id="GO:0048038">
    <property type="term" value="F:quinone binding"/>
    <property type="evidence" value="ECO:0007669"/>
    <property type="project" value="UniProtKB-KW"/>
</dbReference>
<dbReference type="HAMAP" id="MF_01352">
    <property type="entry name" value="NDH1_NDH1M"/>
    <property type="match status" value="1"/>
</dbReference>
<dbReference type="InterPro" id="IPR018922">
    <property type="entry name" value="NdhM"/>
</dbReference>
<dbReference type="PANTHER" id="PTHR36900">
    <property type="entry name" value="NAD(P)H-QUINONE OXIDOREDUCTASE SUBUNIT M, CHLOROPLASTIC"/>
    <property type="match status" value="1"/>
</dbReference>
<dbReference type="PANTHER" id="PTHR36900:SF1">
    <property type="entry name" value="NAD(P)H-QUINONE OXIDOREDUCTASE SUBUNIT M, CHLOROPLASTIC"/>
    <property type="match status" value="1"/>
</dbReference>
<dbReference type="Pfam" id="PF10664">
    <property type="entry name" value="NdhM"/>
    <property type="match status" value="1"/>
</dbReference>
<reference key="1">
    <citation type="journal article" date="2008" name="Proc. Natl. Acad. Sci. U.S.A.">
        <title>The genome of Cyanothece 51142, a unicellular diazotrophic cyanobacterium important in the marine nitrogen cycle.</title>
        <authorList>
            <person name="Welsh E.A."/>
            <person name="Liberton M."/>
            <person name="Stoeckel J."/>
            <person name="Loh T."/>
            <person name="Elvitigala T."/>
            <person name="Wang C."/>
            <person name="Wollam A."/>
            <person name="Fulton R.S."/>
            <person name="Clifton S.W."/>
            <person name="Jacobs J.M."/>
            <person name="Aurora R."/>
            <person name="Ghosh B.K."/>
            <person name="Sherman L.A."/>
            <person name="Smith R.D."/>
            <person name="Wilson R.K."/>
            <person name="Pakrasi H.B."/>
        </authorList>
    </citation>
    <scope>NUCLEOTIDE SEQUENCE [LARGE SCALE GENOMIC DNA]</scope>
    <source>
        <strain>ATCC 51142 / BH68</strain>
    </source>
</reference>
<feature type="chain" id="PRO_0000352181" description="NAD(P)H-quinone oxidoreductase subunit M">
    <location>
        <begin position="1"/>
        <end position="119"/>
    </location>
</feature>
<sequence length="119" mass="13759">MFVKSTTRHIRIYAAEVHNSELVESDNMLTLDVDPDNEFNWDEDALQKVYRKFDELVEAASGEELSDYNLRRIGSDLEHFVRNLLQNGEISYNLKSRVLNYSMGLPKVESPETEGAYNL</sequence>
<keyword id="KW-0472">Membrane</keyword>
<keyword id="KW-0520">NAD</keyword>
<keyword id="KW-0521">NADP</keyword>
<keyword id="KW-0618">Plastoquinone</keyword>
<keyword id="KW-0874">Quinone</keyword>
<keyword id="KW-1185">Reference proteome</keyword>
<keyword id="KW-0793">Thylakoid</keyword>
<keyword id="KW-1278">Translocase</keyword>
<keyword id="KW-0813">Transport</keyword>
<gene>
    <name evidence="1" type="primary">ndhM</name>
    <name type="ordered locus">cce_4330</name>
</gene>